<accession>B9MKI2</accession>
<protein>
    <recommendedName>
        <fullName evidence="1">Small ribosomal subunit protein uS10</fullName>
    </recommendedName>
    <alternativeName>
        <fullName evidence="2">30S ribosomal protein S10</fullName>
    </alternativeName>
</protein>
<comment type="function">
    <text evidence="1">Involved in the binding of tRNA to the ribosomes.</text>
</comment>
<comment type="subunit">
    <text evidence="1">Part of the 30S ribosomal subunit.</text>
</comment>
<comment type="similarity">
    <text evidence="1">Belongs to the universal ribosomal protein uS10 family.</text>
</comment>
<name>RS10_CALBD</name>
<evidence type="ECO:0000255" key="1">
    <source>
        <dbReference type="HAMAP-Rule" id="MF_00508"/>
    </source>
</evidence>
<evidence type="ECO:0000305" key="2"/>
<feature type="chain" id="PRO_1000196279" description="Small ribosomal subunit protein uS10">
    <location>
        <begin position="1"/>
        <end position="106"/>
    </location>
</feature>
<keyword id="KW-0687">Ribonucleoprotein</keyword>
<keyword id="KW-0689">Ribosomal protein</keyword>
<proteinExistence type="inferred from homology"/>
<gene>
    <name evidence="1" type="primary">rpsJ</name>
    <name type="ordered locus">Athe_1746</name>
</gene>
<reference key="1">
    <citation type="submission" date="2009-01" db="EMBL/GenBank/DDBJ databases">
        <title>Complete sequence of chromosome of Caldicellulosiruptor becscii DSM 6725.</title>
        <authorList>
            <person name="Lucas S."/>
            <person name="Copeland A."/>
            <person name="Lapidus A."/>
            <person name="Glavina del Rio T."/>
            <person name="Tice H."/>
            <person name="Bruce D."/>
            <person name="Goodwin L."/>
            <person name="Pitluck S."/>
            <person name="Sims D."/>
            <person name="Meincke L."/>
            <person name="Brettin T."/>
            <person name="Detter J.C."/>
            <person name="Han C."/>
            <person name="Larimer F."/>
            <person name="Land M."/>
            <person name="Hauser L."/>
            <person name="Kyrpides N."/>
            <person name="Ovchinnikova G."/>
            <person name="Kataeva I."/>
            <person name="Adams M.W.W."/>
        </authorList>
    </citation>
    <scope>NUCLEOTIDE SEQUENCE [LARGE SCALE GENOMIC DNA]</scope>
    <source>
        <strain>ATCC BAA-1888 / DSM 6725 / KCTC 15123 / Z-1320</strain>
    </source>
</reference>
<dbReference type="EMBL" id="CP001393">
    <property type="protein sequence ID" value="ACM60840.1"/>
    <property type="molecule type" value="Genomic_DNA"/>
</dbReference>
<dbReference type="RefSeq" id="WP_013290149.1">
    <property type="nucleotide sequence ID" value="NC_012034.1"/>
</dbReference>
<dbReference type="SMR" id="B9MKI2"/>
<dbReference type="STRING" id="521460.Athe_1746"/>
<dbReference type="GeneID" id="31773103"/>
<dbReference type="KEGG" id="ate:Athe_1746"/>
<dbReference type="eggNOG" id="COG0051">
    <property type="taxonomic scope" value="Bacteria"/>
</dbReference>
<dbReference type="HOGENOM" id="CLU_122625_1_3_9"/>
<dbReference type="Proteomes" id="UP000007723">
    <property type="component" value="Chromosome"/>
</dbReference>
<dbReference type="GO" id="GO:1990904">
    <property type="term" value="C:ribonucleoprotein complex"/>
    <property type="evidence" value="ECO:0007669"/>
    <property type="project" value="UniProtKB-KW"/>
</dbReference>
<dbReference type="GO" id="GO:0005840">
    <property type="term" value="C:ribosome"/>
    <property type="evidence" value="ECO:0007669"/>
    <property type="project" value="UniProtKB-KW"/>
</dbReference>
<dbReference type="GO" id="GO:0003735">
    <property type="term" value="F:structural constituent of ribosome"/>
    <property type="evidence" value="ECO:0007669"/>
    <property type="project" value="InterPro"/>
</dbReference>
<dbReference type="GO" id="GO:0000049">
    <property type="term" value="F:tRNA binding"/>
    <property type="evidence" value="ECO:0007669"/>
    <property type="project" value="UniProtKB-UniRule"/>
</dbReference>
<dbReference type="GO" id="GO:0006412">
    <property type="term" value="P:translation"/>
    <property type="evidence" value="ECO:0007669"/>
    <property type="project" value="UniProtKB-UniRule"/>
</dbReference>
<dbReference type="FunFam" id="3.30.70.600:FF:000001">
    <property type="entry name" value="30S ribosomal protein S10"/>
    <property type="match status" value="1"/>
</dbReference>
<dbReference type="Gene3D" id="3.30.70.600">
    <property type="entry name" value="Ribosomal protein S10 domain"/>
    <property type="match status" value="1"/>
</dbReference>
<dbReference type="HAMAP" id="MF_00508">
    <property type="entry name" value="Ribosomal_uS10"/>
    <property type="match status" value="1"/>
</dbReference>
<dbReference type="InterPro" id="IPR001848">
    <property type="entry name" value="Ribosomal_uS10"/>
</dbReference>
<dbReference type="InterPro" id="IPR018268">
    <property type="entry name" value="Ribosomal_uS10_CS"/>
</dbReference>
<dbReference type="InterPro" id="IPR027486">
    <property type="entry name" value="Ribosomal_uS10_dom"/>
</dbReference>
<dbReference type="InterPro" id="IPR036838">
    <property type="entry name" value="Ribosomal_uS10_dom_sf"/>
</dbReference>
<dbReference type="NCBIfam" id="NF001861">
    <property type="entry name" value="PRK00596.1"/>
    <property type="match status" value="1"/>
</dbReference>
<dbReference type="NCBIfam" id="TIGR01049">
    <property type="entry name" value="rpsJ_bact"/>
    <property type="match status" value="1"/>
</dbReference>
<dbReference type="PANTHER" id="PTHR11700">
    <property type="entry name" value="30S RIBOSOMAL PROTEIN S10 FAMILY MEMBER"/>
    <property type="match status" value="1"/>
</dbReference>
<dbReference type="Pfam" id="PF00338">
    <property type="entry name" value="Ribosomal_S10"/>
    <property type="match status" value="1"/>
</dbReference>
<dbReference type="PRINTS" id="PR00971">
    <property type="entry name" value="RIBOSOMALS10"/>
</dbReference>
<dbReference type="SMART" id="SM01403">
    <property type="entry name" value="Ribosomal_S10"/>
    <property type="match status" value="1"/>
</dbReference>
<dbReference type="SUPFAM" id="SSF54999">
    <property type="entry name" value="Ribosomal protein S10"/>
    <property type="match status" value="1"/>
</dbReference>
<dbReference type="PROSITE" id="PS00361">
    <property type="entry name" value="RIBOSOMAL_S10"/>
    <property type="match status" value="1"/>
</dbReference>
<sequence length="106" mass="12139">MSKAQRMRIKLKSFDYKLLEQSAKKIVETAKNTGAEVSGPVPLPTDREVITIIRAPHKYKDSREQFEIKTHKRLIDIIKPTQKTVDALMRVELPAGVDIEIKLKEV</sequence>
<organism>
    <name type="scientific">Caldicellulosiruptor bescii (strain ATCC BAA-1888 / DSM 6725 / KCTC 15123 / Z-1320)</name>
    <name type="common">Anaerocellum thermophilum</name>
    <dbReference type="NCBI Taxonomy" id="521460"/>
    <lineage>
        <taxon>Bacteria</taxon>
        <taxon>Bacillati</taxon>
        <taxon>Bacillota</taxon>
        <taxon>Bacillota incertae sedis</taxon>
        <taxon>Caldicellulosiruptorales</taxon>
        <taxon>Caldicellulosiruptoraceae</taxon>
        <taxon>Caldicellulosiruptor</taxon>
    </lineage>
</organism>